<dbReference type="EMBL" id="JF411744">
    <property type="protein sequence ID" value="AAC96867.2"/>
    <property type="molecule type" value="Genomic_DNA"/>
</dbReference>
<dbReference type="RefSeq" id="NP_048856.2">
    <property type="nucleotide sequence ID" value="NC_000852.5"/>
</dbReference>
<dbReference type="PDB" id="6NCL">
    <property type="method" value="EM"/>
    <property type="resolution" value="3.50 A"/>
    <property type="chains" value="a0=1-352"/>
</dbReference>
<dbReference type="PDBsum" id="6NCL"/>
<dbReference type="EMDB" id="EMD-0436"/>
<dbReference type="SMR" id="Q98550"/>
<dbReference type="GeneID" id="918362"/>
<dbReference type="KEGG" id="vg:918362"/>
<dbReference type="OrthoDB" id="13151at10239"/>
<dbReference type="Proteomes" id="UP000000862">
    <property type="component" value="Genome"/>
</dbReference>
<dbReference type="GO" id="GO:0019028">
    <property type="term" value="C:viral capsid"/>
    <property type="evidence" value="ECO:0007669"/>
    <property type="project" value="UniProtKB-KW"/>
</dbReference>
<evidence type="ECO:0000256" key="1">
    <source>
        <dbReference type="SAM" id="MobiDB-lite"/>
    </source>
</evidence>
<evidence type="ECO:0000269" key="2">
    <source>
    </source>
</evidence>
<evidence type="ECO:0000305" key="3"/>
<evidence type="ECO:0000305" key="4">
    <source>
    </source>
</evidence>
<evidence type="ECO:0000312" key="5">
    <source>
        <dbReference type="EMBL" id="AAC96867.2"/>
    </source>
</evidence>
<evidence type="ECO:0000312" key="6">
    <source>
        <dbReference type="Proteomes" id="UP000000862"/>
    </source>
</evidence>
<evidence type="ECO:0007744" key="7">
    <source>
        <dbReference type="PDB" id="6NCL"/>
    </source>
</evidence>
<comment type="function">
    <text evidence="2">One of the minor capsid proteins that constitute a network internal to the major capsid proteins and outside the lipid membrane (PubMed:30674888). The minor capsid protein P14 does not serve a cross-linking function between neighboring capsomers, it may play a role in the viral capsid assembly (PubMed:30674888).</text>
</comment>
<comment type="subunit">
    <text evidence="2">Interacts with the major capsid protein.</text>
</comment>
<comment type="subcellular location">
    <subcellularLocation>
        <location evidence="2">Virion</location>
    </subcellularLocation>
</comment>
<comment type="domain">
    <text evidence="4">The hydrophobic region might anchor the protein in the underlying inner membrane.</text>
</comment>
<name>P14_PBCV1</name>
<organismHost>
    <name type="scientific">Chlorella</name>
    <dbReference type="NCBI Taxonomy" id="3071"/>
</organismHost>
<organism evidence="5 6">
    <name type="scientific">Paramecium bursaria Chlorella virus 1</name>
    <name type="common">PBCV-1</name>
    <dbReference type="NCBI Taxonomy" id="10506"/>
    <lineage>
        <taxon>Viruses</taxon>
        <taxon>Varidnaviria</taxon>
        <taxon>Bamfordvirae</taxon>
        <taxon>Nucleocytoviricota</taxon>
        <taxon>Megaviricetes</taxon>
        <taxon>Algavirales</taxon>
        <taxon>Phycodnaviridae</taxon>
        <taxon>Chlorovirus</taxon>
    </lineage>
</organism>
<protein>
    <recommendedName>
        <fullName>Minor capsid protein P14</fullName>
    </recommendedName>
</protein>
<keyword id="KW-0002">3D-structure</keyword>
<keyword id="KW-0167">Capsid protein</keyword>
<keyword id="KW-0426">Late protein</keyword>
<keyword id="KW-1185">Reference proteome</keyword>
<keyword id="KW-0946">Virion</keyword>
<gene>
    <name evidence="5" type="primary">A500L</name>
</gene>
<proteinExistence type="evidence at protein level"/>
<feature type="chain" id="PRO_0000460580" description="Minor capsid protein P14">
    <location>
        <begin position="1"/>
        <end position="352"/>
    </location>
</feature>
<feature type="region of interest" description="Disordered" evidence="1">
    <location>
        <begin position="122"/>
        <end position="214"/>
    </location>
</feature>
<feature type="region of interest" description="Hydrophobic" evidence="3">
    <location>
        <begin position="244"/>
        <end position="264"/>
    </location>
</feature>
<feature type="compositionally biased region" description="Basic residues" evidence="1">
    <location>
        <begin position="129"/>
        <end position="145"/>
    </location>
</feature>
<feature type="compositionally biased region" description="Pro residues" evidence="1">
    <location>
        <begin position="146"/>
        <end position="204"/>
    </location>
</feature>
<sequence>MQTPSIIQCGLLNSFARKMTDAISDNQIIATSRFFNIARDVADVVVSNTKLAQQYEQLSIDSLKEYLVSVAKFVAVDYSNTTSADVDDLIHKLRLFIEEECYQYNIDKEETCDGDVCVSDEYNEPAPKPKPKPKPKPAPKPKPAPKPKPAPKPAPKPAPKPAPKPAPKPAPKPAPKPAPEPAPEPAPEPAPKPAPEPAPEPAPIRPARRCDENPSNLETCCTNKALYGDFTDSSCDIVKKKTNWWLWGGIAILVIVLMIGGYFIYKRYFSAPKFENTGEFVNDMNFNNDVNFNNDVNFDNDMNYGNEGIDVSDLEILNLPVPSVSPVPSASIVPSVSPIPRGSPVPSASPIK</sequence>
<accession>Q98550</accession>
<reference key="1">
    <citation type="journal article" date="1996" name="Virology">
        <title>Analysis of 76 kb of the chlorella virus PBCV-1 330-kb genome: map positions 182 to 258.</title>
        <authorList>
            <person name="Kutish G.F."/>
            <person name="Li Y."/>
            <person name="Lu Z."/>
            <person name="Furuta M."/>
            <person name="Rock D.L."/>
            <person name="van Etten J.L."/>
        </authorList>
    </citation>
    <scope>NUCLEOTIDE SEQUENCE [LARGE SCALE GENOMIC DNA]</scope>
</reference>
<reference evidence="7" key="2">
    <citation type="journal article" date="2019" name="Nat. Commun.">
        <title>Near-atomic structure of a giant virus.</title>
        <authorList>
            <person name="Fang Q."/>
            <person name="Zhu D."/>
            <person name="Agarkova I."/>
            <person name="Adhikari J."/>
            <person name="Klose T."/>
            <person name="Liu Y."/>
            <person name="Chen Z."/>
            <person name="Sun Y."/>
            <person name="Gross M.L."/>
            <person name="Van Etten J.L."/>
            <person name="Zhang X."/>
            <person name="Rossmann M.G."/>
        </authorList>
    </citation>
    <scope>STRUCTURE BY ELECTRON MICROSCOPY (3.50 ANGSTROMS)</scope>
    <scope>FUNCTION</scope>
    <scope>SUBCELLULAR LOCATION</scope>
    <scope>INTERACTION WITH THE MAJOR CAPSID PROTEIN</scope>
</reference>